<organism>
    <name type="scientific">Salmonella typhimurium (strain LT2 / SGSC1412 / ATCC 700720)</name>
    <dbReference type="NCBI Taxonomy" id="99287"/>
    <lineage>
        <taxon>Bacteria</taxon>
        <taxon>Pseudomonadati</taxon>
        <taxon>Pseudomonadota</taxon>
        <taxon>Gammaproteobacteria</taxon>
        <taxon>Enterobacterales</taxon>
        <taxon>Enterobacteriaceae</taxon>
        <taxon>Salmonella</taxon>
    </lineage>
</organism>
<gene>
    <name type="primary">rfbM</name>
    <name type="ordered locus">STM2084</name>
</gene>
<feature type="chain" id="PRO_0000194261" description="Mannose-1-phosphate guanylyltransferase RfbM">
    <location>
        <begin position="1"/>
        <end position="479"/>
    </location>
</feature>
<comment type="function">
    <text>Involved in GDP-mannose biosynthesis which serves as the activated sugar nucleotide precursor for mannose residues in cell surface polysaccharides. This enzyme participates in synthesis of the LPS group B O antigen.</text>
</comment>
<comment type="catalytic activity">
    <reaction evidence="1">
        <text>alpha-D-mannose 1-phosphate + GTP + H(+) = GDP-alpha-D-mannose + diphosphate</text>
        <dbReference type="Rhea" id="RHEA:15229"/>
        <dbReference type="ChEBI" id="CHEBI:15378"/>
        <dbReference type="ChEBI" id="CHEBI:33019"/>
        <dbReference type="ChEBI" id="CHEBI:37565"/>
        <dbReference type="ChEBI" id="CHEBI:57527"/>
        <dbReference type="ChEBI" id="CHEBI:58409"/>
        <dbReference type="EC" id="2.7.7.13"/>
    </reaction>
</comment>
<comment type="biophysicochemical properties">
    <kinetics>
        <KM evidence="1">0.01 mM for mannose-1-phosphate</KM>
        <KM evidence="1">0.2 mM for GTP</KM>
        <Vmax evidence="1">1.8 umol/min/mg enzyme toward mannose-1-phosphate</Vmax>
        <Vmax evidence="1">2.4 umol/min/mg enzyme toward GTP</Vmax>
    </kinetics>
</comment>
<comment type="pathway">
    <text>Nucleotide-sugar biosynthesis; GDP-alpha-D-mannose biosynthesis; GDP-alpha-D-mannose from alpha-D-mannose 1-phosphate (GTP route): step 1/1.</text>
</comment>
<comment type="pathway">
    <text>Bacterial outer membrane biogenesis; LPS O-antigen biosynthesis.</text>
</comment>
<comment type="subunit">
    <text evidence="1">Homodimer.</text>
</comment>
<comment type="similarity">
    <text evidence="2">Belongs to the mannose-6-phosphate isomerase type 2 family.</text>
</comment>
<protein>
    <recommendedName>
        <fullName>Mannose-1-phosphate guanylyltransferase RfbM</fullName>
        <ecNumber>2.7.7.13</ecNumber>
    </recommendedName>
    <alternativeName>
        <fullName>GDP-mannose pyrophosphorylase</fullName>
        <shortName>GMP</shortName>
        <shortName>GMPP</shortName>
    </alternativeName>
    <alternativeName>
        <fullName>GTP--mannose-1-phosphate guanylyltransferase</fullName>
    </alternativeName>
</protein>
<evidence type="ECO:0000269" key="1">
    <source>
    </source>
</evidence>
<evidence type="ECO:0000305" key="2"/>
<dbReference type="EC" id="2.7.7.13"/>
<dbReference type="EMBL" id="X56793">
    <property type="protein sequence ID" value="CAA40128.1"/>
    <property type="molecule type" value="Genomic_DNA"/>
</dbReference>
<dbReference type="EMBL" id="AE006468">
    <property type="protein sequence ID" value="AAL20988.1"/>
    <property type="molecule type" value="Genomic_DNA"/>
</dbReference>
<dbReference type="PIR" id="S15312">
    <property type="entry name" value="S15312"/>
</dbReference>
<dbReference type="RefSeq" id="NP_461029.1">
    <property type="nucleotide sequence ID" value="NC_003197.2"/>
</dbReference>
<dbReference type="RefSeq" id="WP_000009017.1">
    <property type="nucleotide sequence ID" value="NC_003197.2"/>
</dbReference>
<dbReference type="SMR" id="P26404"/>
<dbReference type="STRING" id="99287.STM2084"/>
<dbReference type="PaxDb" id="99287-STM2084"/>
<dbReference type="GeneID" id="1253605"/>
<dbReference type="KEGG" id="stm:STM2084"/>
<dbReference type="PATRIC" id="fig|99287.12.peg.2206"/>
<dbReference type="HOGENOM" id="CLU_035527_1_0_6"/>
<dbReference type="OMA" id="VTHINYR"/>
<dbReference type="PhylomeDB" id="P26404"/>
<dbReference type="BioCyc" id="SENT99287:STM2084-MONOMER"/>
<dbReference type="SABIO-RK" id="P26404"/>
<dbReference type="UniPathway" id="UPA00126">
    <property type="reaction ID" value="UER00930"/>
</dbReference>
<dbReference type="UniPathway" id="UPA00281"/>
<dbReference type="Proteomes" id="UP000001014">
    <property type="component" value="Chromosome"/>
</dbReference>
<dbReference type="GO" id="GO:0005525">
    <property type="term" value="F:GTP binding"/>
    <property type="evidence" value="ECO:0007669"/>
    <property type="project" value="UniProtKB-KW"/>
</dbReference>
<dbReference type="GO" id="GO:0004475">
    <property type="term" value="F:mannose-1-phosphate guanylyltransferase (GTP) activity"/>
    <property type="evidence" value="ECO:0000318"/>
    <property type="project" value="GO_Central"/>
</dbReference>
<dbReference type="GO" id="GO:0009298">
    <property type="term" value="P:GDP-mannose biosynthetic process"/>
    <property type="evidence" value="ECO:0000318"/>
    <property type="project" value="GO_Central"/>
</dbReference>
<dbReference type="GO" id="GO:0009243">
    <property type="term" value="P:O antigen biosynthetic process"/>
    <property type="evidence" value="ECO:0007669"/>
    <property type="project" value="UniProtKB-UniPathway"/>
</dbReference>
<dbReference type="CDD" id="cd02213">
    <property type="entry name" value="cupin_PMI_typeII_C"/>
    <property type="match status" value="1"/>
</dbReference>
<dbReference type="CDD" id="cd02509">
    <property type="entry name" value="GDP-M1P_Guanylyltransferase"/>
    <property type="match status" value="1"/>
</dbReference>
<dbReference type="FunFam" id="3.90.550.10:FF:000046">
    <property type="entry name" value="Mannose-1-phosphate guanylyltransferase (GDP)"/>
    <property type="match status" value="1"/>
</dbReference>
<dbReference type="FunFam" id="2.60.120.10:FF:000032">
    <property type="entry name" value="Mannose-1-phosphate guanylyltransferase/mannose-6-phosphate isomerase"/>
    <property type="match status" value="1"/>
</dbReference>
<dbReference type="Gene3D" id="2.60.120.10">
    <property type="entry name" value="Jelly Rolls"/>
    <property type="match status" value="1"/>
</dbReference>
<dbReference type="Gene3D" id="3.90.550.10">
    <property type="entry name" value="Spore Coat Polysaccharide Biosynthesis Protein SpsA, Chain A"/>
    <property type="match status" value="1"/>
</dbReference>
<dbReference type="InterPro" id="IPR049577">
    <property type="entry name" value="GMPP_N"/>
</dbReference>
<dbReference type="InterPro" id="IPR006375">
    <property type="entry name" value="Man1P_GuaTrfase/Man6P_Isoase"/>
</dbReference>
<dbReference type="InterPro" id="IPR001538">
    <property type="entry name" value="Man6P_isomerase-2_C"/>
</dbReference>
<dbReference type="InterPro" id="IPR054566">
    <property type="entry name" value="ManC/GMP-like_b-helix"/>
</dbReference>
<dbReference type="InterPro" id="IPR051161">
    <property type="entry name" value="Mannose-6P_isomerase_type2"/>
</dbReference>
<dbReference type="InterPro" id="IPR005835">
    <property type="entry name" value="NTP_transferase_dom"/>
</dbReference>
<dbReference type="InterPro" id="IPR029044">
    <property type="entry name" value="Nucleotide-diphossugar_trans"/>
</dbReference>
<dbReference type="InterPro" id="IPR014710">
    <property type="entry name" value="RmlC-like_jellyroll"/>
</dbReference>
<dbReference type="InterPro" id="IPR011051">
    <property type="entry name" value="RmlC_Cupin_sf"/>
</dbReference>
<dbReference type="NCBIfam" id="TIGR01479">
    <property type="entry name" value="GMP_PMI"/>
    <property type="match status" value="1"/>
</dbReference>
<dbReference type="PANTHER" id="PTHR46390">
    <property type="entry name" value="MANNOSE-1-PHOSPHATE GUANYLYLTRANSFERASE"/>
    <property type="match status" value="1"/>
</dbReference>
<dbReference type="PANTHER" id="PTHR46390:SF1">
    <property type="entry name" value="MANNOSE-1-PHOSPHATE GUANYLYLTRANSFERASE"/>
    <property type="match status" value="1"/>
</dbReference>
<dbReference type="Pfam" id="PF22640">
    <property type="entry name" value="ManC_GMP_beta-helix"/>
    <property type="match status" value="1"/>
</dbReference>
<dbReference type="Pfam" id="PF01050">
    <property type="entry name" value="MannoseP_isomer"/>
    <property type="match status" value="1"/>
</dbReference>
<dbReference type="Pfam" id="PF00483">
    <property type="entry name" value="NTP_transferase"/>
    <property type="match status" value="1"/>
</dbReference>
<dbReference type="SUPFAM" id="SSF53448">
    <property type="entry name" value="Nucleotide-diphospho-sugar transferases"/>
    <property type="match status" value="1"/>
</dbReference>
<dbReference type="SUPFAM" id="SSF51182">
    <property type="entry name" value="RmlC-like cupins"/>
    <property type="match status" value="1"/>
</dbReference>
<name>RFBM_SALTY</name>
<proteinExistence type="evidence at protein level"/>
<accession>P26404</accession>
<keyword id="KW-0903">Direct protein sequencing</keyword>
<keyword id="KW-0342">GTP-binding</keyword>
<keyword id="KW-0448">Lipopolysaccharide biosynthesis</keyword>
<keyword id="KW-0547">Nucleotide-binding</keyword>
<keyword id="KW-0548">Nucleotidyltransferase</keyword>
<keyword id="KW-1185">Reference proteome</keyword>
<keyword id="KW-0808">Transferase</keyword>
<reference key="1">
    <citation type="journal article" date="1991" name="Mol. Microbiol.">
        <title>Structure and sequence of the rfb (O antigen) gene cluster of Salmonella serovar typhimurium (strain LT2).</title>
        <authorList>
            <person name="Jiang X.-M."/>
            <person name="Neal B."/>
            <person name="Santiago F."/>
            <person name="Lee S.J."/>
            <person name="Romana L.K."/>
            <person name="Reeves P.R."/>
        </authorList>
    </citation>
    <scope>NUCLEOTIDE SEQUENCE [GENOMIC DNA]</scope>
    <source>
        <strain>LT2</strain>
    </source>
</reference>
<reference key="2">
    <citation type="journal article" date="2001" name="Nature">
        <title>Complete genome sequence of Salmonella enterica serovar Typhimurium LT2.</title>
        <authorList>
            <person name="McClelland M."/>
            <person name="Sanderson K.E."/>
            <person name="Spieth J."/>
            <person name="Clifton S.W."/>
            <person name="Latreille P."/>
            <person name="Courtney L."/>
            <person name="Porwollik S."/>
            <person name="Ali J."/>
            <person name="Dante M."/>
            <person name="Du F."/>
            <person name="Hou S."/>
            <person name="Layman D."/>
            <person name="Leonard S."/>
            <person name="Nguyen C."/>
            <person name="Scott K."/>
            <person name="Holmes A."/>
            <person name="Grewal N."/>
            <person name="Mulvaney E."/>
            <person name="Ryan E."/>
            <person name="Sun H."/>
            <person name="Florea L."/>
            <person name="Miller W."/>
            <person name="Stoneking T."/>
            <person name="Nhan M."/>
            <person name="Waterston R."/>
            <person name="Wilson R.K."/>
        </authorList>
    </citation>
    <scope>NUCLEOTIDE SEQUENCE [LARGE SCALE GENOMIC DNA]</scope>
    <source>
        <strain>LT2 / SGSC1412 / ATCC 700720</strain>
    </source>
</reference>
<reference key="3">
    <citation type="journal article" date="1996" name="Glycobiology">
        <title>Expression, purification and characterization of recombinant phosphomannomutase and GDP-alpha-D-mannose pyrophosphorylase from Salmonella enterica, group B, for the synthesis of GDP-alpha-D-mannose from D-mannose.</title>
        <authorList>
            <person name="Elling L."/>
            <person name="Ritter J.E."/>
            <person name="Verseck S."/>
        </authorList>
    </citation>
    <scope>PROTEIN SEQUENCE OF 1-13</scope>
    <scope>CATALYTIC ACTIVITY</scope>
    <scope>BIOPHYSICOCHEMICAL PROPERTIES</scope>
    <scope>SUBUNIT</scope>
    <source>
        <strain>LT2</strain>
    </source>
</reference>
<sequence length="479" mass="54046">MSFLPVIMAGGTGSRLWPLSREYHPKQFLSVEGKLSMLQNTIKRLASLSTEEPVVICNDRHRFLVAEQLREIDKLANNIILEPVGRNTAPAIALAAFCALQNADNADPLLLVLAADHVIQDEIAFTKAVRHAEEYAANGKLVTFGIVPTHAETGYGYIRRGELIGNDAYAVAEFVEKPDIDTAGDYFKSGKYYWNSGMFLFRASSYLNELKYLSPEIYKACEKAVGHINPDLDFIRIDKEEFMSCPSDSIDYAVMEHTQHAVVIPMSAGWSDVGSWSSLWDISNKDHQRNVLKGDIFAHACNDNYIYSEDMFISAIGVSNLVIVQTTDALLVANKDTVQDVKKIVDYLKRNDRNEYKQHQEVFRPWGKYNVIDSGKNYLVRCITVKPGEKFVAQMHHHRAEHWIVLSGTARVTKGEQTYMVSENESTFIPPNTIHALENPGMTPLKLIEIQSGTYLGEDDIIRLEQRSGFSKEWTNERS</sequence>